<gene>
    <name evidence="1" type="primary">plsB</name>
    <name type="ordered locus">HD_0546</name>
</gene>
<dbReference type="EC" id="2.3.1.15" evidence="1"/>
<dbReference type="EMBL" id="AE017143">
    <property type="protein sequence ID" value="AAP95485.1"/>
    <property type="molecule type" value="Genomic_DNA"/>
</dbReference>
<dbReference type="RefSeq" id="WP_010944538.1">
    <property type="nucleotide sequence ID" value="NC_002940.2"/>
</dbReference>
<dbReference type="SMR" id="Q7VNI5"/>
<dbReference type="STRING" id="233412.HD_0546"/>
<dbReference type="KEGG" id="hdu:HD_0546"/>
<dbReference type="eggNOG" id="COG2937">
    <property type="taxonomic scope" value="Bacteria"/>
</dbReference>
<dbReference type="HOGENOM" id="CLU_015407_0_0_6"/>
<dbReference type="OrthoDB" id="335193at2"/>
<dbReference type="UniPathway" id="UPA00557">
    <property type="reaction ID" value="UER00612"/>
</dbReference>
<dbReference type="Proteomes" id="UP000001022">
    <property type="component" value="Chromosome"/>
</dbReference>
<dbReference type="GO" id="GO:0005886">
    <property type="term" value="C:plasma membrane"/>
    <property type="evidence" value="ECO:0007669"/>
    <property type="project" value="UniProtKB-SubCell"/>
</dbReference>
<dbReference type="GO" id="GO:0004366">
    <property type="term" value="F:glycerol-3-phosphate O-acyltransferase activity"/>
    <property type="evidence" value="ECO:0007669"/>
    <property type="project" value="UniProtKB-UniRule"/>
</dbReference>
<dbReference type="GO" id="GO:0016024">
    <property type="term" value="P:CDP-diacylglycerol biosynthetic process"/>
    <property type="evidence" value="ECO:0007669"/>
    <property type="project" value="UniProtKB-UniRule"/>
</dbReference>
<dbReference type="GO" id="GO:0006631">
    <property type="term" value="P:fatty acid metabolic process"/>
    <property type="evidence" value="ECO:0007669"/>
    <property type="project" value="TreeGrafter"/>
</dbReference>
<dbReference type="CDD" id="cd07993">
    <property type="entry name" value="LPLAT_DHAPAT-like"/>
    <property type="match status" value="1"/>
</dbReference>
<dbReference type="HAMAP" id="MF_00393">
    <property type="entry name" value="Glyc3P_acyltrans"/>
    <property type="match status" value="1"/>
</dbReference>
<dbReference type="InterPro" id="IPR022284">
    <property type="entry name" value="GPAT/DHAPAT"/>
</dbReference>
<dbReference type="InterPro" id="IPR045520">
    <property type="entry name" value="GPAT/DHAPAT_C"/>
</dbReference>
<dbReference type="InterPro" id="IPR041728">
    <property type="entry name" value="GPAT/DHAPAT_LPLAT"/>
</dbReference>
<dbReference type="InterPro" id="IPR028354">
    <property type="entry name" value="GPAT_PlsB"/>
</dbReference>
<dbReference type="InterPro" id="IPR002123">
    <property type="entry name" value="Plipid/glycerol_acylTrfase"/>
</dbReference>
<dbReference type="NCBIfam" id="TIGR03703">
    <property type="entry name" value="plsB"/>
    <property type="match status" value="1"/>
</dbReference>
<dbReference type="NCBIfam" id="NF003441">
    <property type="entry name" value="PRK04974.1"/>
    <property type="match status" value="1"/>
</dbReference>
<dbReference type="PANTHER" id="PTHR12563:SF17">
    <property type="entry name" value="DIHYDROXYACETONE PHOSPHATE ACYLTRANSFERASE"/>
    <property type="match status" value="1"/>
</dbReference>
<dbReference type="PANTHER" id="PTHR12563">
    <property type="entry name" value="GLYCEROL-3-PHOSPHATE ACYLTRANSFERASE"/>
    <property type="match status" value="1"/>
</dbReference>
<dbReference type="Pfam" id="PF01553">
    <property type="entry name" value="Acyltransferase"/>
    <property type="match status" value="1"/>
</dbReference>
<dbReference type="Pfam" id="PF19277">
    <property type="entry name" value="GPAT_C"/>
    <property type="match status" value="1"/>
</dbReference>
<dbReference type="PIRSF" id="PIRSF500064">
    <property type="entry name" value="GPAT"/>
    <property type="match status" value="1"/>
</dbReference>
<dbReference type="PIRSF" id="PIRSF000437">
    <property type="entry name" value="GPAT_DHAPAT"/>
    <property type="match status" value="1"/>
</dbReference>
<dbReference type="SMART" id="SM00563">
    <property type="entry name" value="PlsC"/>
    <property type="match status" value="1"/>
</dbReference>
<dbReference type="SUPFAM" id="SSF69593">
    <property type="entry name" value="Glycerol-3-phosphate (1)-acyltransferase"/>
    <property type="match status" value="1"/>
</dbReference>
<sequence>MSSLLSFYRNILNFPLSLLVKSQAIPTDPVSELGLNLEQPIIYVLPYTSQTDLLILQKNCLALNLPDPLVENDIQGQSLPRYVFLDEGHRFFKSKGVKSETESLFYRYLDLHKTDETLDVQLVPVSVLWGRSPGKETAPSLRLLSRFQRIIAMIWFGRDNFVRFSQAVSLCYMVKEYGAEKGIAQKLARVAKIHFAKQRYSAMGPRLPERQAMFDKLIQLPTIVQAIEDEAKTKKIPIPKARQEAEKILDEIAADVSHGTLRMADRVLSWLWNKLYQGINVQNADRVRKLALEGHEIIYVPCHRSHMDYLLLSYILYHQGVVPPHIAAGINLNFWPAGPFFRRGGAFFIRRTFKGNRLYSTVFREYLAELFYRGYSVEYFIEGGRSRTGRLLEPKTGMVSMTLQALQRGLNRPISIVPVYIGYEHVLEVDTYAKELRGAAKEKENAELVLRVIKKLRNLGQGYVNFGKPIQVNSYLNQHFPEWKLPPVENVRPKWLNEAVDAIAKQVMVNINNAAAVNAKNLIGSVLLASRQRALSREQLIEQVESYLQLFQNVSYSSDIILPTESADEMLEHVLALPRSGVMSEKDNFGEMIRLDRESAVLMTYYRNNIQHLFVLPSLVASIVLHNEAASKTLIRETVSHIYPFLKAELFLHFDEKEVLEQVELILTEFIRQQIVKYDGDVLTINRRRLPTLQLHAAGIREILQRYYISLSLLLECPAISRTLLEKESRMIAQRLSILHGINAPEFFDKAIFSTFTASLKAQGYFDLEGHTVIEKVEEVAHILRRLISVEVQLTIQGAMDKVDQIDEKLE</sequence>
<proteinExistence type="inferred from homology"/>
<reference key="1">
    <citation type="submission" date="2003-06" db="EMBL/GenBank/DDBJ databases">
        <title>The complete genome sequence of Haemophilus ducreyi.</title>
        <authorList>
            <person name="Munson R.S. Jr."/>
            <person name="Ray W.C."/>
            <person name="Mahairas G."/>
            <person name="Sabo P."/>
            <person name="Mungur R."/>
            <person name="Johnson L."/>
            <person name="Nguyen D."/>
            <person name="Wang J."/>
            <person name="Forst C."/>
            <person name="Hood L."/>
        </authorList>
    </citation>
    <scope>NUCLEOTIDE SEQUENCE [LARGE SCALE GENOMIC DNA]</scope>
    <source>
        <strain>35000HP / ATCC 700724</strain>
    </source>
</reference>
<accession>Q7VNI5</accession>
<organism>
    <name type="scientific">Haemophilus ducreyi (strain 35000HP / ATCC 700724)</name>
    <dbReference type="NCBI Taxonomy" id="233412"/>
    <lineage>
        <taxon>Bacteria</taxon>
        <taxon>Pseudomonadati</taxon>
        <taxon>Pseudomonadota</taxon>
        <taxon>Gammaproteobacteria</taxon>
        <taxon>Pasteurellales</taxon>
        <taxon>Pasteurellaceae</taxon>
        <taxon>Haemophilus</taxon>
    </lineage>
</organism>
<comment type="catalytic activity">
    <reaction evidence="1">
        <text>sn-glycerol 3-phosphate + an acyl-CoA = a 1-acyl-sn-glycero-3-phosphate + CoA</text>
        <dbReference type="Rhea" id="RHEA:15325"/>
        <dbReference type="ChEBI" id="CHEBI:57287"/>
        <dbReference type="ChEBI" id="CHEBI:57597"/>
        <dbReference type="ChEBI" id="CHEBI:57970"/>
        <dbReference type="ChEBI" id="CHEBI:58342"/>
        <dbReference type="EC" id="2.3.1.15"/>
    </reaction>
</comment>
<comment type="pathway">
    <text evidence="1">Phospholipid metabolism; CDP-diacylglycerol biosynthesis; CDP-diacylglycerol from sn-glycerol 3-phosphate: step 1/3.</text>
</comment>
<comment type="subcellular location">
    <subcellularLocation>
        <location evidence="1">Cell inner membrane</location>
        <topology evidence="1">Peripheral membrane protein</topology>
        <orientation evidence="1">Cytoplasmic side</orientation>
    </subcellularLocation>
</comment>
<comment type="domain">
    <text evidence="1">The HXXXXD motif is essential for acyltransferase activity and may constitute the binding site for the phosphate moiety of the glycerol-3-phosphate.</text>
</comment>
<comment type="similarity">
    <text evidence="1">Belongs to the GPAT/DAPAT family.</text>
</comment>
<feature type="chain" id="PRO_0000195221" description="Glycerol-3-phosphate acyltransferase">
    <location>
        <begin position="1"/>
        <end position="811"/>
    </location>
</feature>
<feature type="short sequence motif" description="HXXXXD motif">
    <location>
        <begin position="303"/>
        <end position="308"/>
    </location>
</feature>
<protein>
    <recommendedName>
        <fullName evidence="1">Glycerol-3-phosphate acyltransferase</fullName>
        <shortName evidence="1">GPAT</shortName>
        <ecNumber evidence="1">2.3.1.15</ecNumber>
    </recommendedName>
</protein>
<name>PLSB_HAEDU</name>
<evidence type="ECO:0000255" key="1">
    <source>
        <dbReference type="HAMAP-Rule" id="MF_00393"/>
    </source>
</evidence>
<keyword id="KW-0012">Acyltransferase</keyword>
<keyword id="KW-0997">Cell inner membrane</keyword>
<keyword id="KW-1003">Cell membrane</keyword>
<keyword id="KW-0444">Lipid biosynthesis</keyword>
<keyword id="KW-0443">Lipid metabolism</keyword>
<keyword id="KW-0472">Membrane</keyword>
<keyword id="KW-0594">Phospholipid biosynthesis</keyword>
<keyword id="KW-1208">Phospholipid metabolism</keyword>
<keyword id="KW-1185">Reference proteome</keyword>
<keyword id="KW-0808">Transferase</keyword>